<name>AT5F1_DROME</name>
<proteinExistence type="evidence at transcript level"/>
<evidence type="ECO:0000255" key="1"/>
<evidence type="ECO:0000305" key="2"/>
<evidence type="ECO:0000312" key="3">
    <source>
        <dbReference type="FlyBase" id="FBgn0019644"/>
    </source>
</evidence>
<accession>Q94516</accession>
<accession>Q53XF7</accession>
<accession>Q8IQC9</accession>
<accession>Q9VT43</accession>
<reference key="1">
    <citation type="journal article" date="2000" name="Science">
        <title>The genome sequence of Drosophila melanogaster.</title>
        <authorList>
            <person name="Adams M.D."/>
            <person name="Celniker S.E."/>
            <person name="Holt R.A."/>
            <person name="Evans C.A."/>
            <person name="Gocayne J.D."/>
            <person name="Amanatides P.G."/>
            <person name="Scherer S.E."/>
            <person name="Li P.W."/>
            <person name="Hoskins R.A."/>
            <person name="Galle R.F."/>
            <person name="George R.A."/>
            <person name="Lewis S.E."/>
            <person name="Richards S."/>
            <person name="Ashburner M."/>
            <person name="Henderson S.N."/>
            <person name="Sutton G.G."/>
            <person name="Wortman J.R."/>
            <person name="Yandell M.D."/>
            <person name="Zhang Q."/>
            <person name="Chen L.X."/>
            <person name="Brandon R.C."/>
            <person name="Rogers Y.-H.C."/>
            <person name="Blazej R.G."/>
            <person name="Champe M."/>
            <person name="Pfeiffer B.D."/>
            <person name="Wan K.H."/>
            <person name="Doyle C."/>
            <person name="Baxter E.G."/>
            <person name="Helt G."/>
            <person name="Nelson C.R."/>
            <person name="Miklos G.L.G."/>
            <person name="Abril J.F."/>
            <person name="Agbayani A."/>
            <person name="An H.-J."/>
            <person name="Andrews-Pfannkoch C."/>
            <person name="Baldwin D."/>
            <person name="Ballew R.M."/>
            <person name="Basu A."/>
            <person name="Baxendale J."/>
            <person name="Bayraktaroglu L."/>
            <person name="Beasley E.M."/>
            <person name="Beeson K.Y."/>
            <person name="Benos P.V."/>
            <person name="Berman B.P."/>
            <person name="Bhandari D."/>
            <person name="Bolshakov S."/>
            <person name="Borkova D."/>
            <person name="Botchan M.R."/>
            <person name="Bouck J."/>
            <person name="Brokstein P."/>
            <person name="Brottier P."/>
            <person name="Burtis K.C."/>
            <person name="Busam D.A."/>
            <person name="Butler H."/>
            <person name="Cadieu E."/>
            <person name="Center A."/>
            <person name="Chandra I."/>
            <person name="Cherry J.M."/>
            <person name="Cawley S."/>
            <person name="Dahlke C."/>
            <person name="Davenport L.B."/>
            <person name="Davies P."/>
            <person name="de Pablos B."/>
            <person name="Delcher A."/>
            <person name="Deng Z."/>
            <person name="Mays A.D."/>
            <person name="Dew I."/>
            <person name="Dietz S.M."/>
            <person name="Dodson K."/>
            <person name="Doup L.E."/>
            <person name="Downes M."/>
            <person name="Dugan-Rocha S."/>
            <person name="Dunkov B.C."/>
            <person name="Dunn P."/>
            <person name="Durbin K.J."/>
            <person name="Evangelista C.C."/>
            <person name="Ferraz C."/>
            <person name="Ferriera S."/>
            <person name="Fleischmann W."/>
            <person name="Fosler C."/>
            <person name="Gabrielian A.E."/>
            <person name="Garg N.S."/>
            <person name="Gelbart W.M."/>
            <person name="Glasser K."/>
            <person name="Glodek A."/>
            <person name="Gong F."/>
            <person name="Gorrell J.H."/>
            <person name="Gu Z."/>
            <person name="Guan P."/>
            <person name="Harris M."/>
            <person name="Harris N.L."/>
            <person name="Harvey D.A."/>
            <person name="Heiman T.J."/>
            <person name="Hernandez J.R."/>
            <person name="Houck J."/>
            <person name="Hostin D."/>
            <person name="Houston K.A."/>
            <person name="Howland T.J."/>
            <person name="Wei M.-H."/>
            <person name="Ibegwam C."/>
            <person name="Jalali M."/>
            <person name="Kalush F."/>
            <person name="Karpen G.H."/>
            <person name="Ke Z."/>
            <person name="Kennison J.A."/>
            <person name="Ketchum K.A."/>
            <person name="Kimmel B.E."/>
            <person name="Kodira C.D."/>
            <person name="Kraft C.L."/>
            <person name="Kravitz S."/>
            <person name="Kulp D."/>
            <person name="Lai Z."/>
            <person name="Lasko P."/>
            <person name="Lei Y."/>
            <person name="Levitsky A.A."/>
            <person name="Li J.H."/>
            <person name="Li Z."/>
            <person name="Liang Y."/>
            <person name="Lin X."/>
            <person name="Liu X."/>
            <person name="Mattei B."/>
            <person name="McIntosh T.C."/>
            <person name="McLeod M.P."/>
            <person name="McPherson D."/>
            <person name="Merkulov G."/>
            <person name="Milshina N.V."/>
            <person name="Mobarry C."/>
            <person name="Morris J."/>
            <person name="Moshrefi A."/>
            <person name="Mount S.M."/>
            <person name="Moy M."/>
            <person name="Murphy B."/>
            <person name="Murphy L."/>
            <person name="Muzny D.M."/>
            <person name="Nelson D.L."/>
            <person name="Nelson D.R."/>
            <person name="Nelson K.A."/>
            <person name="Nixon K."/>
            <person name="Nusskern D.R."/>
            <person name="Pacleb J.M."/>
            <person name="Palazzolo M."/>
            <person name="Pittman G.S."/>
            <person name="Pan S."/>
            <person name="Pollard J."/>
            <person name="Puri V."/>
            <person name="Reese M.G."/>
            <person name="Reinert K."/>
            <person name="Remington K."/>
            <person name="Saunders R.D.C."/>
            <person name="Scheeler F."/>
            <person name="Shen H."/>
            <person name="Shue B.C."/>
            <person name="Siden-Kiamos I."/>
            <person name="Simpson M."/>
            <person name="Skupski M.P."/>
            <person name="Smith T.J."/>
            <person name="Spier E."/>
            <person name="Spradling A.C."/>
            <person name="Stapleton M."/>
            <person name="Strong R."/>
            <person name="Sun E."/>
            <person name="Svirskas R."/>
            <person name="Tector C."/>
            <person name="Turner R."/>
            <person name="Venter E."/>
            <person name="Wang A.H."/>
            <person name="Wang X."/>
            <person name="Wang Z.-Y."/>
            <person name="Wassarman D.A."/>
            <person name="Weinstock G.M."/>
            <person name="Weissenbach J."/>
            <person name="Williams S.M."/>
            <person name="Woodage T."/>
            <person name="Worley K.C."/>
            <person name="Wu D."/>
            <person name="Yang S."/>
            <person name="Yao Q.A."/>
            <person name="Ye J."/>
            <person name="Yeh R.-F."/>
            <person name="Zaveri J.S."/>
            <person name="Zhan M."/>
            <person name="Zhang G."/>
            <person name="Zhao Q."/>
            <person name="Zheng L."/>
            <person name="Zheng X.H."/>
            <person name="Zhong F.N."/>
            <person name="Zhong W."/>
            <person name="Zhou X."/>
            <person name="Zhu S.C."/>
            <person name="Zhu X."/>
            <person name="Smith H.O."/>
            <person name="Gibbs R.A."/>
            <person name="Myers E.W."/>
            <person name="Rubin G.M."/>
            <person name="Venter J.C."/>
        </authorList>
    </citation>
    <scope>NUCLEOTIDE SEQUENCE [LARGE SCALE GENOMIC DNA]</scope>
    <source>
        <strain>Berkeley</strain>
    </source>
</reference>
<reference key="2">
    <citation type="journal article" date="2002" name="Genome Biol.">
        <title>Annotation of the Drosophila melanogaster euchromatic genome: a systematic review.</title>
        <authorList>
            <person name="Misra S."/>
            <person name="Crosby M.A."/>
            <person name="Mungall C.J."/>
            <person name="Matthews B.B."/>
            <person name="Campbell K.S."/>
            <person name="Hradecky P."/>
            <person name="Huang Y."/>
            <person name="Kaminker J.S."/>
            <person name="Millburn G.H."/>
            <person name="Prochnik S.E."/>
            <person name="Smith C.D."/>
            <person name="Tupy J.L."/>
            <person name="Whitfield E.J."/>
            <person name="Bayraktaroglu L."/>
            <person name="Berman B.P."/>
            <person name="Bettencourt B.R."/>
            <person name="Celniker S.E."/>
            <person name="de Grey A.D.N.J."/>
            <person name="Drysdale R.A."/>
            <person name="Harris N.L."/>
            <person name="Richter J."/>
            <person name="Russo S."/>
            <person name="Schroeder A.J."/>
            <person name="Shu S.Q."/>
            <person name="Stapleton M."/>
            <person name="Yamada C."/>
            <person name="Ashburner M."/>
            <person name="Gelbart W.M."/>
            <person name="Rubin G.M."/>
            <person name="Lewis S.E."/>
        </authorList>
    </citation>
    <scope>GENOME REANNOTATION</scope>
    <source>
        <strain>Berkeley</strain>
    </source>
</reference>
<reference key="3">
    <citation type="submission" date="2004-01" db="EMBL/GenBank/DDBJ databases">
        <authorList>
            <person name="Stapleton M."/>
            <person name="Brokstein P."/>
            <person name="Hong L."/>
            <person name="Agbayani A."/>
            <person name="Carlson J.W."/>
            <person name="Champe M."/>
            <person name="Chavez C."/>
            <person name="Dorsett V."/>
            <person name="Dresnek D."/>
            <person name="Farfan D."/>
            <person name="Frise E."/>
            <person name="George R.A."/>
            <person name="Gonzalez M."/>
            <person name="Guarin H."/>
            <person name="Kronmiller B."/>
            <person name="Li P.W."/>
            <person name="Liao G."/>
            <person name="Miranda A."/>
            <person name="Mungall C.J."/>
            <person name="Nunoo J."/>
            <person name="Pacleb J.M."/>
            <person name="Paragas V."/>
            <person name="Park S."/>
            <person name="Patel S."/>
            <person name="Phouanenavong S."/>
            <person name="Wan K.H."/>
            <person name="Yu C."/>
            <person name="Lewis S.E."/>
            <person name="Rubin G.M."/>
            <person name="Celniker S.E."/>
        </authorList>
    </citation>
    <scope>NUCLEOTIDE SEQUENCE [LARGE SCALE MRNA]</scope>
    <source>
        <strain>Berkeley</strain>
        <tissue>Embryo</tissue>
        <tissue>Ovary</tissue>
    </source>
</reference>
<reference key="4">
    <citation type="journal article" date="1999" name="Mol. Gen. Genet.">
        <title>Identification of nuclear genes encoding mitochondrial proteins: isolation of a collection of D. melanogaster cDNAs homologous to sequences in the Human Gene Index database.</title>
        <authorList>
            <person name="Caggese C."/>
            <person name="Ragone G."/>
            <person name="Perrini B."/>
            <person name="Moschetti R."/>
            <person name="de Pinto V."/>
            <person name="Caizzi R."/>
            <person name="Barsanti P."/>
        </authorList>
    </citation>
    <scope>NUCLEOTIDE SEQUENCE [MRNA] OF 60-243</scope>
    <source>
        <tissue>Ovary</tissue>
    </source>
</reference>
<sequence>MFSRAALLTAQRPLTVAATRSAAAAAAPGGAIERRQRPEHPGKVRLGFLPEEWFQFFYNKTGVTGPYTFGVGLITYLCSKEIYVMEHEYYSGLSLGIMAIIAVKKLGPVIAKWADGEIDKIESEWKEGREAELKVLSDAIEAEKKEQWRADGALLLMEAKKENIALQLEAAFRERAMNVYSEVKRRLDYQVECRHVERRLSQKHMVNWITTNVLASISPQQEKETLNKCIADLSALALRVKSA</sequence>
<feature type="transit peptide" description="Mitochondrion" evidence="1">
    <location>
        <begin position="1"/>
        <end status="unknown"/>
    </location>
</feature>
<feature type="chain" id="PRO_0000002517" description="ATP synthase subunit b, mitochondrial">
    <location>
        <begin status="unknown"/>
        <end position="243"/>
    </location>
</feature>
<feature type="sequence conflict" description="In Ref. 4; CAA70164." evidence="2" ref="4">
    <original>KRR</original>
    <variation>NRP</variation>
    <location>
        <begin position="184"/>
        <end position="186"/>
    </location>
</feature>
<keyword id="KW-0138">CF(0)</keyword>
<keyword id="KW-0375">Hydrogen ion transport</keyword>
<keyword id="KW-0406">Ion transport</keyword>
<keyword id="KW-0472">Membrane</keyword>
<keyword id="KW-0496">Mitochondrion</keyword>
<keyword id="KW-0999">Mitochondrion inner membrane</keyword>
<keyword id="KW-1185">Reference proteome</keyword>
<keyword id="KW-0809">Transit peptide</keyword>
<keyword id="KW-0813">Transport</keyword>
<organism>
    <name type="scientific">Drosophila melanogaster</name>
    <name type="common">Fruit fly</name>
    <dbReference type="NCBI Taxonomy" id="7227"/>
    <lineage>
        <taxon>Eukaryota</taxon>
        <taxon>Metazoa</taxon>
        <taxon>Ecdysozoa</taxon>
        <taxon>Arthropoda</taxon>
        <taxon>Hexapoda</taxon>
        <taxon>Insecta</taxon>
        <taxon>Pterygota</taxon>
        <taxon>Neoptera</taxon>
        <taxon>Endopterygota</taxon>
        <taxon>Diptera</taxon>
        <taxon>Brachycera</taxon>
        <taxon>Muscomorpha</taxon>
        <taxon>Ephydroidea</taxon>
        <taxon>Drosophilidae</taxon>
        <taxon>Drosophila</taxon>
        <taxon>Sophophora</taxon>
    </lineage>
</organism>
<protein>
    <recommendedName>
        <fullName>ATP synthase subunit b, mitochondrial</fullName>
        <shortName>ATPase subunit b</shortName>
    </recommendedName>
    <alternativeName>
        <fullName>FO-ATP synthase subunit b</fullName>
    </alternativeName>
</protein>
<dbReference type="EMBL" id="AE014296">
    <property type="protein sequence ID" value="AAF50212.1"/>
    <property type="molecule type" value="Genomic_DNA"/>
</dbReference>
<dbReference type="EMBL" id="BT004878">
    <property type="protein sequence ID" value="AAO45234.1"/>
    <property type="status" value="ALT_SEQ"/>
    <property type="molecule type" value="mRNA"/>
</dbReference>
<dbReference type="EMBL" id="BT011453">
    <property type="protein sequence ID" value="AAR99111.1"/>
    <property type="molecule type" value="mRNA"/>
</dbReference>
<dbReference type="EMBL" id="Y08967">
    <property type="protein sequence ID" value="CAA70164.1"/>
    <property type="molecule type" value="mRNA"/>
</dbReference>
<dbReference type="RefSeq" id="NP_524011.1">
    <property type="nucleotide sequence ID" value="NM_079287.2"/>
</dbReference>
<dbReference type="SMR" id="Q94516"/>
<dbReference type="BioGRID" id="64531">
    <property type="interactions" value="43"/>
</dbReference>
<dbReference type="ComplexPortal" id="CPX-8618">
    <property type="entry name" value="Mitochondrial proton-transporting ATP synthase complex"/>
</dbReference>
<dbReference type="DIP" id="DIP-19184N"/>
<dbReference type="FunCoup" id="Q94516">
    <property type="interactions" value="1218"/>
</dbReference>
<dbReference type="IntAct" id="Q94516">
    <property type="interactions" value="56"/>
</dbReference>
<dbReference type="STRING" id="7227.FBpp0076134"/>
<dbReference type="PaxDb" id="7227-FBpp0076134"/>
<dbReference type="DNASU" id="39143"/>
<dbReference type="EnsemblMetazoa" id="FBtr0076405">
    <property type="protein sequence ID" value="FBpp0076134"/>
    <property type="gene ID" value="FBgn0019644"/>
</dbReference>
<dbReference type="GeneID" id="39143"/>
<dbReference type="KEGG" id="dme:Dmel_CG8189"/>
<dbReference type="AGR" id="FB:FBgn0019644"/>
<dbReference type="CTD" id="39143"/>
<dbReference type="FlyBase" id="FBgn0019644">
    <property type="gene designation" value="ATPsynB"/>
</dbReference>
<dbReference type="VEuPathDB" id="VectorBase:FBgn0019644"/>
<dbReference type="eggNOG" id="KOG3976">
    <property type="taxonomic scope" value="Eukaryota"/>
</dbReference>
<dbReference type="GeneTree" id="ENSGT00390000001958"/>
<dbReference type="HOGENOM" id="CLU_087186_1_0_1"/>
<dbReference type="InParanoid" id="Q94516"/>
<dbReference type="OMA" id="PEEWFTF"/>
<dbReference type="OrthoDB" id="67388at2759"/>
<dbReference type="PhylomeDB" id="Q94516"/>
<dbReference type="Reactome" id="R-DME-163210">
    <property type="pathway name" value="Formation of ATP by chemiosmotic coupling"/>
</dbReference>
<dbReference type="Reactome" id="R-DME-8949613">
    <property type="pathway name" value="Cristae formation"/>
</dbReference>
<dbReference type="SignaLink" id="Q94516"/>
<dbReference type="BioGRID-ORCS" id="39143">
    <property type="hits" value="1 hit in 1 CRISPR screen"/>
</dbReference>
<dbReference type="ChiTaRS" id="ATPsynB">
    <property type="organism name" value="fly"/>
</dbReference>
<dbReference type="GenomeRNAi" id="39143"/>
<dbReference type="PRO" id="PR:Q94516"/>
<dbReference type="Proteomes" id="UP000000803">
    <property type="component" value="Chromosome 3L"/>
</dbReference>
<dbReference type="Bgee" id="FBgn0019644">
    <property type="expression patterns" value="Expressed in eye disc (Drosophila) and 276 other cell types or tissues"/>
</dbReference>
<dbReference type="GO" id="GO:0005743">
    <property type="term" value="C:mitochondrial inner membrane"/>
    <property type="evidence" value="ECO:0000250"/>
    <property type="project" value="FlyBase"/>
</dbReference>
<dbReference type="GO" id="GO:0005739">
    <property type="term" value="C:mitochondrion"/>
    <property type="evidence" value="ECO:0007005"/>
    <property type="project" value="FlyBase"/>
</dbReference>
<dbReference type="GO" id="GO:0045259">
    <property type="term" value="C:proton-transporting ATP synthase complex"/>
    <property type="evidence" value="ECO:0000314"/>
    <property type="project" value="FlyBase"/>
</dbReference>
<dbReference type="GO" id="GO:0015078">
    <property type="term" value="F:proton transmembrane transporter activity"/>
    <property type="evidence" value="ECO:0007669"/>
    <property type="project" value="InterPro"/>
</dbReference>
<dbReference type="GO" id="GO:0015986">
    <property type="term" value="P:proton motive force-driven ATP synthesis"/>
    <property type="evidence" value="ECO:0000250"/>
    <property type="project" value="FlyBase"/>
</dbReference>
<dbReference type="GO" id="GO:1902600">
    <property type="term" value="P:proton transmembrane transport"/>
    <property type="evidence" value="ECO:0000250"/>
    <property type="project" value="FlyBase"/>
</dbReference>
<dbReference type="FunFam" id="1.20.5.2210:FF:000003">
    <property type="entry name" value="ATP synthase subunit B"/>
    <property type="match status" value="1"/>
</dbReference>
<dbReference type="Gene3D" id="1.20.5.2210">
    <property type="match status" value="1"/>
</dbReference>
<dbReference type="InterPro" id="IPR008688">
    <property type="entry name" value="ATP_synth_Bsub_B/MI25"/>
</dbReference>
<dbReference type="InterPro" id="IPR013837">
    <property type="entry name" value="ATP_synth_F0_suB"/>
</dbReference>
<dbReference type="PANTHER" id="PTHR12733:SF3">
    <property type="entry name" value="ATP SYNTHASE F(0) COMPLEX SUBUNIT B1, MITOCHONDRIAL"/>
    <property type="match status" value="1"/>
</dbReference>
<dbReference type="PANTHER" id="PTHR12733">
    <property type="entry name" value="MITOCHONDRIAL ATP SYNTHASE B CHAIN"/>
    <property type="match status" value="1"/>
</dbReference>
<dbReference type="Pfam" id="PF05405">
    <property type="entry name" value="Mt_ATP-synt_B"/>
    <property type="match status" value="1"/>
</dbReference>
<dbReference type="SUPFAM" id="SSF161060">
    <property type="entry name" value="ATP synthase B chain-like"/>
    <property type="match status" value="1"/>
</dbReference>
<comment type="function">
    <text>Mitochondrial membrane ATP synthase (F(1)F(0) ATP synthase or Complex V) produces ATP from ADP in the presence of a proton gradient across the membrane which is generated by electron transport complexes of the respiratory chain. F-type ATPases consist of two structural domains, F(1) - containing the extramembraneous catalytic core, and F(0) - containing the membrane proton channel, linked together by a central stalk and a peripheral stalk. During catalysis, ATP synthesis in the catalytic domain of F(1) is coupled via a rotary mechanism of the central stalk subunits to proton translocation. Part of the complex F(0) domain and the peripheric stalk, which acts as a stator to hold the catalytic alpha(3)beta(3) subcomplex and subunit a/ATP6 static relative to the rotary elements.</text>
</comment>
<comment type="subunit">
    <text>F-type ATPases have 2 components, CF(1) - the catalytic core - and CF(0) - the membrane proton channel. CF(1) has five subunits: alpha(3), beta(3), gamma(1), delta(1), epsilon(1). CF(0) has three main subunits: a, b and c.</text>
</comment>
<comment type="subcellular location">
    <subcellularLocation>
        <location>Mitochondrion</location>
    </subcellularLocation>
    <subcellularLocation>
        <location>Mitochondrion inner membrane</location>
    </subcellularLocation>
</comment>
<comment type="similarity">
    <text evidence="2">Belongs to the eukaryotic ATPase B chain family.</text>
</comment>
<comment type="sequence caution" evidence="2">
    <conflict type="miscellaneous discrepancy">
        <sequence resource="EMBL-CDS" id="AAO45234"/>
    </conflict>
    <text>Intron retention.</text>
</comment>
<gene>
    <name evidence="3" type="primary">ATPsynB</name>
    <name type="synonym">ATPsyn-b</name>
    <name type="synonym">ATPsyn-beta</name>
    <name evidence="3" type="ORF">CG8189</name>
</gene>